<reference key="1">
    <citation type="journal article" date="2006" name="Plant Physiol.">
        <title>The cyclin-dependent kinase inhibitor Orysa;KRP1 plays an important role in seed development of rice.</title>
        <authorList>
            <person name="Barroco R.M."/>
            <person name="Peres A."/>
            <person name="Droual A.-M."/>
            <person name="de Veylder L."/>
            <person name="Nguyen L.S.L."/>
            <person name="de Wolf J."/>
            <person name="Mironov V."/>
            <person name="Peerbolte R."/>
            <person name="Beemster G.T.S."/>
            <person name="Inze D."/>
            <person name="Broekaert W.F."/>
            <person name="Frankard V."/>
        </authorList>
    </citation>
    <scope>NUCLEOTIDE SEQUENCE [MRNA]</scope>
    <scope>FUNCTION</scope>
    <scope>TISSUE SPECIFICITY</scope>
    <scope>DEVELOPMENTAL STAGE</scope>
</reference>
<reference key="2">
    <citation type="journal article" date="2005" name="Nature">
        <title>The map-based sequence of the rice genome.</title>
        <authorList>
            <consortium name="International rice genome sequencing project (IRGSP)"/>
        </authorList>
    </citation>
    <scope>NUCLEOTIDE SEQUENCE [LARGE SCALE GENOMIC DNA]</scope>
    <source>
        <strain>cv. Nipponbare</strain>
    </source>
</reference>
<reference key="3">
    <citation type="journal article" date="2008" name="Nucleic Acids Res.">
        <title>The rice annotation project database (RAP-DB): 2008 update.</title>
        <authorList>
            <consortium name="The rice annotation project (RAP)"/>
        </authorList>
    </citation>
    <scope>GENOME REANNOTATION</scope>
    <source>
        <strain>cv. Nipponbare</strain>
    </source>
</reference>
<reference key="4">
    <citation type="journal article" date="2013" name="Rice">
        <title>Improvement of the Oryza sativa Nipponbare reference genome using next generation sequence and optical map data.</title>
        <authorList>
            <person name="Kawahara Y."/>
            <person name="de la Bastide M."/>
            <person name="Hamilton J.P."/>
            <person name="Kanamori H."/>
            <person name="McCombie W.R."/>
            <person name="Ouyang S."/>
            <person name="Schwartz D.C."/>
            <person name="Tanaka T."/>
            <person name="Wu J."/>
            <person name="Zhou S."/>
            <person name="Childs K.L."/>
            <person name="Davidson R.M."/>
            <person name="Lin H."/>
            <person name="Quesada-Ocampo L."/>
            <person name="Vaillancourt B."/>
            <person name="Sakai H."/>
            <person name="Lee S.S."/>
            <person name="Kim J."/>
            <person name="Numa H."/>
            <person name="Itoh T."/>
            <person name="Buell C.R."/>
            <person name="Matsumoto T."/>
        </authorList>
    </citation>
    <scope>GENOME REANNOTATION</scope>
    <source>
        <strain>cv. Nipponbare</strain>
    </source>
</reference>
<reference key="5">
    <citation type="journal article" date="2005" name="PLoS Biol.">
        <title>The genomes of Oryza sativa: a history of duplications.</title>
        <authorList>
            <person name="Yu J."/>
            <person name="Wang J."/>
            <person name="Lin W."/>
            <person name="Li S."/>
            <person name="Li H."/>
            <person name="Zhou J."/>
            <person name="Ni P."/>
            <person name="Dong W."/>
            <person name="Hu S."/>
            <person name="Zeng C."/>
            <person name="Zhang J."/>
            <person name="Zhang Y."/>
            <person name="Li R."/>
            <person name="Xu Z."/>
            <person name="Li S."/>
            <person name="Li X."/>
            <person name="Zheng H."/>
            <person name="Cong L."/>
            <person name="Lin L."/>
            <person name="Yin J."/>
            <person name="Geng J."/>
            <person name="Li G."/>
            <person name="Shi J."/>
            <person name="Liu J."/>
            <person name="Lv H."/>
            <person name="Li J."/>
            <person name="Wang J."/>
            <person name="Deng Y."/>
            <person name="Ran L."/>
            <person name="Shi X."/>
            <person name="Wang X."/>
            <person name="Wu Q."/>
            <person name="Li C."/>
            <person name="Ren X."/>
            <person name="Wang J."/>
            <person name="Wang X."/>
            <person name="Li D."/>
            <person name="Liu D."/>
            <person name="Zhang X."/>
            <person name="Ji Z."/>
            <person name="Zhao W."/>
            <person name="Sun Y."/>
            <person name="Zhang Z."/>
            <person name="Bao J."/>
            <person name="Han Y."/>
            <person name="Dong L."/>
            <person name="Ji J."/>
            <person name="Chen P."/>
            <person name="Wu S."/>
            <person name="Liu J."/>
            <person name="Xiao Y."/>
            <person name="Bu D."/>
            <person name="Tan J."/>
            <person name="Yang L."/>
            <person name="Ye C."/>
            <person name="Zhang J."/>
            <person name="Xu J."/>
            <person name="Zhou Y."/>
            <person name="Yu Y."/>
            <person name="Zhang B."/>
            <person name="Zhuang S."/>
            <person name="Wei H."/>
            <person name="Liu B."/>
            <person name="Lei M."/>
            <person name="Yu H."/>
            <person name="Li Y."/>
            <person name="Xu H."/>
            <person name="Wei S."/>
            <person name="He X."/>
            <person name="Fang L."/>
            <person name="Zhang Z."/>
            <person name="Zhang Y."/>
            <person name="Huang X."/>
            <person name="Su Z."/>
            <person name="Tong W."/>
            <person name="Li J."/>
            <person name="Tong Z."/>
            <person name="Li S."/>
            <person name="Ye J."/>
            <person name="Wang L."/>
            <person name="Fang L."/>
            <person name="Lei T."/>
            <person name="Chen C.-S."/>
            <person name="Chen H.-C."/>
            <person name="Xu Z."/>
            <person name="Li H."/>
            <person name="Huang H."/>
            <person name="Zhang F."/>
            <person name="Xu H."/>
            <person name="Li N."/>
            <person name="Zhao C."/>
            <person name="Li S."/>
            <person name="Dong L."/>
            <person name="Huang Y."/>
            <person name="Li L."/>
            <person name="Xi Y."/>
            <person name="Qi Q."/>
            <person name="Li W."/>
            <person name="Zhang B."/>
            <person name="Hu W."/>
            <person name="Zhang Y."/>
            <person name="Tian X."/>
            <person name="Jiao Y."/>
            <person name="Liang X."/>
            <person name="Jin J."/>
            <person name="Gao L."/>
            <person name="Zheng W."/>
            <person name="Hao B."/>
            <person name="Liu S.-M."/>
            <person name="Wang W."/>
            <person name="Yuan L."/>
            <person name="Cao M."/>
            <person name="McDermott J."/>
            <person name="Samudrala R."/>
            <person name="Wang J."/>
            <person name="Wong G.K.-S."/>
            <person name="Yang H."/>
        </authorList>
    </citation>
    <scope>NUCLEOTIDE SEQUENCE [LARGE SCALE GENOMIC DNA]</scope>
    <source>
        <strain>cv. Nipponbare</strain>
    </source>
</reference>
<reference key="6">
    <citation type="journal article" date="2003" name="Science">
        <title>Collection, mapping, and annotation of over 28,000 cDNA clones from japonica rice.</title>
        <authorList>
            <consortium name="The rice full-length cDNA consortium"/>
        </authorList>
    </citation>
    <scope>NUCLEOTIDE SEQUENCE [LARGE SCALE MRNA]</scope>
    <source>
        <strain>cv. Nipponbare</strain>
    </source>
</reference>
<reference key="7">
    <citation type="journal article" date="2007" name="Plant Mol. Biol.">
        <title>Genome-wide identification and expression analysis of rice cell cycle genes.</title>
        <authorList>
            <person name="Guo J."/>
            <person name="Song J."/>
            <person name="Wang F."/>
            <person name="Zhang X.S."/>
        </authorList>
    </citation>
    <scope>INDUCTION</scope>
    <scope>GENE FAMILY</scope>
</reference>
<name>KRP1_ORYSJ</name>
<feature type="chain" id="PRO_0000295663" description="Cyclin-dependent kinase inhibitor 1">
    <location>
        <begin position="1"/>
        <end position="262"/>
    </location>
</feature>
<feature type="region of interest" description="Disordered" evidence="1">
    <location>
        <begin position="140"/>
        <end position="212"/>
    </location>
</feature>
<feature type="compositionally biased region" description="Basic and acidic residues" evidence="1">
    <location>
        <begin position="160"/>
        <end position="169"/>
    </location>
</feature>
<feature type="compositionally biased region" description="Low complexity" evidence="1">
    <location>
        <begin position="198"/>
        <end position="208"/>
    </location>
</feature>
<dbReference type="EMBL" id="DQ229362">
    <property type="protein sequence ID" value="ABB70058.1"/>
    <property type="molecule type" value="mRNA"/>
</dbReference>
<dbReference type="EMBL" id="AP005002">
    <property type="protein sequence ID" value="BAD17213.1"/>
    <property type="molecule type" value="Genomic_DNA"/>
</dbReference>
<dbReference type="EMBL" id="AP008208">
    <property type="protein sequence ID" value="BAF10118.1"/>
    <property type="molecule type" value="Genomic_DNA"/>
</dbReference>
<dbReference type="EMBL" id="AP014958">
    <property type="protein sequence ID" value="BAS81044.1"/>
    <property type="molecule type" value="Genomic_DNA"/>
</dbReference>
<dbReference type="EMBL" id="CM000139">
    <property type="protein sequence ID" value="EAZ24711.1"/>
    <property type="status" value="ALT_INIT"/>
    <property type="molecule type" value="Genomic_DNA"/>
</dbReference>
<dbReference type="EMBL" id="AK103084">
    <property type="protein sequence ID" value="BAG95878.1"/>
    <property type="molecule type" value="mRNA"/>
</dbReference>
<dbReference type="RefSeq" id="XP_015623243.1">
    <property type="nucleotide sequence ID" value="XM_015767757.1"/>
</dbReference>
<dbReference type="FunCoup" id="Q6Z6G5">
    <property type="interactions" value="13"/>
</dbReference>
<dbReference type="STRING" id="39947.Q6Z6G5"/>
<dbReference type="PaxDb" id="39947-Q6Z6G5"/>
<dbReference type="EnsemblPlants" id="Os02t0762400-01">
    <property type="protein sequence ID" value="Os02t0762400-01"/>
    <property type="gene ID" value="Os02g0762400"/>
</dbReference>
<dbReference type="Gramene" id="Os02t0762400-01">
    <property type="protein sequence ID" value="Os02t0762400-01"/>
    <property type="gene ID" value="Os02g0762400"/>
</dbReference>
<dbReference type="KEGG" id="dosa:Os02g0762400"/>
<dbReference type="eggNOG" id="ENOG502RZHP">
    <property type="taxonomic scope" value="Eukaryota"/>
</dbReference>
<dbReference type="HOGENOM" id="CLU_062111_0_0_1"/>
<dbReference type="InParanoid" id="Q6Z6G5"/>
<dbReference type="OMA" id="KYMRSKC"/>
<dbReference type="OrthoDB" id="685885at2759"/>
<dbReference type="PlantReactome" id="R-OSA-9630286">
    <property type="pathway name" value="Cell cycle regulation"/>
</dbReference>
<dbReference type="PlantReactome" id="R-OSA-9640760">
    <property type="pathway name" value="G1 phase"/>
</dbReference>
<dbReference type="Proteomes" id="UP000000763">
    <property type="component" value="Chromosome 2"/>
</dbReference>
<dbReference type="Proteomes" id="UP000007752">
    <property type="component" value="Chromosome 2"/>
</dbReference>
<dbReference type="Proteomes" id="UP000059680">
    <property type="component" value="Chromosome 2"/>
</dbReference>
<dbReference type="GO" id="GO:0005634">
    <property type="term" value="C:nucleus"/>
    <property type="evidence" value="ECO:0007669"/>
    <property type="project" value="InterPro"/>
</dbReference>
<dbReference type="GO" id="GO:0004861">
    <property type="term" value="F:cyclin-dependent protein serine/threonine kinase inhibitor activity"/>
    <property type="evidence" value="ECO:0007669"/>
    <property type="project" value="InterPro"/>
</dbReference>
<dbReference type="GO" id="GO:0051301">
    <property type="term" value="P:cell division"/>
    <property type="evidence" value="ECO:0007669"/>
    <property type="project" value="UniProtKB-KW"/>
</dbReference>
<dbReference type="GO" id="GO:0051726">
    <property type="term" value="P:regulation of cell cycle"/>
    <property type="evidence" value="ECO:0007669"/>
    <property type="project" value="InterPro"/>
</dbReference>
<dbReference type="Gene3D" id="4.10.365.10">
    <property type="entry name" value="p27"/>
    <property type="match status" value="1"/>
</dbReference>
<dbReference type="InterPro" id="IPR003175">
    <property type="entry name" value="CDI_dom"/>
</dbReference>
<dbReference type="InterPro" id="IPR044898">
    <property type="entry name" value="CDI_dom_sf"/>
</dbReference>
<dbReference type="InterPro" id="IPR044275">
    <property type="entry name" value="KRP"/>
</dbReference>
<dbReference type="PANTHER" id="PTHR46776">
    <property type="entry name" value="CYCLIN-DEPENDENT KINASE INHIBITOR 4-RELATED"/>
    <property type="match status" value="1"/>
</dbReference>
<dbReference type="Pfam" id="PF02234">
    <property type="entry name" value="CDI"/>
    <property type="match status" value="1"/>
</dbReference>
<keyword id="KW-0131">Cell cycle</keyword>
<keyword id="KW-0132">Cell division</keyword>
<keyword id="KW-0498">Mitosis</keyword>
<keyword id="KW-0649">Protein kinase inhibitor</keyword>
<keyword id="KW-1185">Reference proteome</keyword>
<proteinExistence type="evidence at transcript level"/>
<sequence>MGKYMRKFRGATGEELAAMEVTQVVGVRTRSRSAAAAGATTTKVKAASAASTRRRKALLPTAVVGTTRRDGGSCYLQLRSRMLFMAPPRPAPAARAPVVAEAAGSGNGAAAHAAAGLSRCSSTASSVDAAAQDRSLACRSDVAEAGSEHVPEGSASDSASGRDRERRETTPSSFLPGEVSDLESDLAGGQKRSRPLPSAATASAQQATRPKIPPAAEIEAFFAAAEEAEAKRFAAKYNFDVVRGVPLDAGRFEWTPVVSSRS</sequence>
<comment type="function">
    <text evidence="2">Regulates the production of endosperm cells, affecting seed filling and embryo development. Regulates endoreduplication of endosperm cells. May play a role in the exit from the mitotic cell cycle during rice grain formation. Inhibitis leaf elongation rates by decreasing cell number, that is partly compensated by increased cell size. May not affect growth rate or cell size of the primary root.</text>
</comment>
<comment type="tissue specificity">
    <text evidence="2">Expressed in roots, stems, leaves and apex.</text>
</comment>
<comment type="developmental stage">
    <text evidence="2">Expressed throughout seed development in the pericarp and endosperm tissues with a peak at 8 days after pollination in the outermost cell layers located centripetally to the endosperm.</text>
</comment>
<comment type="induction">
    <text evidence="3">Down-regulated by cytokinin.</text>
</comment>
<comment type="miscellaneous">
    <text>Plants overexpressing KRP1 show a reduction in the filling rate of about 2/3, and no embryo is observed in the empty seeds or seeds containing underdeveloped endosperm.</text>
</comment>
<comment type="similarity">
    <text evidence="4">Belongs to the CDI family. ICK/KRP subfamily.</text>
</comment>
<comment type="sequence caution" evidence="4">
    <conflict type="erroneous initiation">
        <sequence resource="EMBL-CDS" id="EAZ24711"/>
    </conflict>
</comment>
<accession>Q6Z6G5</accession>
<accession>A3ABM2</accession>
<accession>B7EU31</accession>
<gene>
    <name type="primary">KRP1</name>
    <name type="ordered locus">Os02g0762400</name>
    <name type="ordered locus">LOC_Os02g52480</name>
    <name type="ORF">OsJ_008194</name>
    <name type="ORF">P0486G03.18</name>
</gene>
<evidence type="ECO:0000256" key="1">
    <source>
        <dbReference type="SAM" id="MobiDB-lite"/>
    </source>
</evidence>
<evidence type="ECO:0000269" key="2">
    <source>
    </source>
</evidence>
<evidence type="ECO:0000269" key="3">
    <source>
    </source>
</evidence>
<evidence type="ECO:0000305" key="4"/>
<protein>
    <recommendedName>
        <fullName>Cyclin-dependent kinase inhibitor 1</fullName>
    </recommendedName>
    <alternativeName>
        <fullName>KIP-related protein 1</fullName>
    </alternativeName>
</protein>
<organism>
    <name type="scientific">Oryza sativa subsp. japonica</name>
    <name type="common">Rice</name>
    <dbReference type="NCBI Taxonomy" id="39947"/>
    <lineage>
        <taxon>Eukaryota</taxon>
        <taxon>Viridiplantae</taxon>
        <taxon>Streptophyta</taxon>
        <taxon>Embryophyta</taxon>
        <taxon>Tracheophyta</taxon>
        <taxon>Spermatophyta</taxon>
        <taxon>Magnoliopsida</taxon>
        <taxon>Liliopsida</taxon>
        <taxon>Poales</taxon>
        <taxon>Poaceae</taxon>
        <taxon>BOP clade</taxon>
        <taxon>Oryzoideae</taxon>
        <taxon>Oryzeae</taxon>
        <taxon>Oryzinae</taxon>
        <taxon>Oryza</taxon>
        <taxon>Oryza sativa</taxon>
    </lineage>
</organism>